<keyword id="KW-0378">Hydrolase</keyword>
<keyword id="KW-0460">Magnesium</keyword>
<keyword id="KW-0479">Metal-binding</keyword>
<keyword id="KW-0546">Nucleotide metabolism</keyword>
<keyword id="KW-0547">Nucleotide-binding</keyword>
<keyword id="KW-1185">Reference proteome</keyword>
<organism>
    <name type="scientific">Lactiplantibacillus plantarum (strain ATCC BAA-793 / NCIMB 8826 / WCFS1)</name>
    <name type="common">Lactobacillus plantarum</name>
    <dbReference type="NCBI Taxonomy" id="220668"/>
    <lineage>
        <taxon>Bacteria</taxon>
        <taxon>Bacillati</taxon>
        <taxon>Bacillota</taxon>
        <taxon>Bacilli</taxon>
        <taxon>Lactobacillales</taxon>
        <taxon>Lactobacillaceae</taxon>
        <taxon>Lactiplantibacillus</taxon>
    </lineage>
</organism>
<evidence type="ECO:0000255" key="1">
    <source>
        <dbReference type="HAMAP-Rule" id="MF_01405"/>
    </source>
</evidence>
<accession>Q88V20</accession>
<accession>F9UQI6</accession>
<dbReference type="EC" id="3.6.1.66" evidence="1"/>
<dbReference type="EMBL" id="AL935263">
    <property type="protein sequence ID" value="CCC79475.1"/>
    <property type="molecule type" value="Genomic_DNA"/>
</dbReference>
<dbReference type="RefSeq" id="WP_003641531.1">
    <property type="nucleotide sequence ID" value="NC_004567.2"/>
</dbReference>
<dbReference type="RefSeq" id="YP_004889989.1">
    <property type="nucleotide sequence ID" value="NC_004567.2"/>
</dbReference>
<dbReference type="SMR" id="Q88V20"/>
<dbReference type="STRING" id="220668.lp_2267"/>
<dbReference type="EnsemblBacteria" id="CCC79475">
    <property type="protein sequence ID" value="CCC79475"/>
    <property type="gene ID" value="lp_2267"/>
</dbReference>
<dbReference type="KEGG" id="lpl:lp_2267"/>
<dbReference type="PATRIC" id="fig|220668.9.peg.1918"/>
<dbReference type="eggNOG" id="COG0127">
    <property type="taxonomic scope" value="Bacteria"/>
</dbReference>
<dbReference type="HOGENOM" id="CLU_082080_0_2_9"/>
<dbReference type="OrthoDB" id="9807456at2"/>
<dbReference type="PhylomeDB" id="Q88V20"/>
<dbReference type="Proteomes" id="UP000000432">
    <property type="component" value="Chromosome"/>
</dbReference>
<dbReference type="GO" id="GO:0005829">
    <property type="term" value="C:cytosol"/>
    <property type="evidence" value="ECO:0007669"/>
    <property type="project" value="TreeGrafter"/>
</dbReference>
<dbReference type="GO" id="GO:0035870">
    <property type="term" value="F:dITP diphosphatase activity"/>
    <property type="evidence" value="ECO:0007669"/>
    <property type="project" value="RHEA"/>
</dbReference>
<dbReference type="GO" id="GO:0036220">
    <property type="term" value="F:ITP diphosphatase activity"/>
    <property type="evidence" value="ECO:0007669"/>
    <property type="project" value="UniProtKB-EC"/>
</dbReference>
<dbReference type="GO" id="GO:0046872">
    <property type="term" value="F:metal ion binding"/>
    <property type="evidence" value="ECO:0007669"/>
    <property type="project" value="UniProtKB-KW"/>
</dbReference>
<dbReference type="GO" id="GO:0000166">
    <property type="term" value="F:nucleotide binding"/>
    <property type="evidence" value="ECO:0007669"/>
    <property type="project" value="UniProtKB-KW"/>
</dbReference>
<dbReference type="GO" id="GO:0017111">
    <property type="term" value="F:ribonucleoside triphosphate phosphatase activity"/>
    <property type="evidence" value="ECO:0007669"/>
    <property type="project" value="InterPro"/>
</dbReference>
<dbReference type="GO" id="GO:0036222">
    <property type="term" value="F:XTP diphosphatase activity"/>
    <property type="evidence" value="ECO:0007669"/>
    <property type="project" value="RHEA"/>
</dbReference>
<dbReference type="GO" id="GO:0009117">
    <property type="term" value="P:nucleotide metabolic process"/>
    <property type="evidence" value="ECO:0007669"/>
    <property type="project" value="UniProtKB-KW"/>
</dbReference>
<dbReference type="GO" id="GO:0009146">
    <property type="term" value="P:purine nucleoside triphosphate catabolic process"/>
    <property type="evidence" value="ECO:0007669"/>
    <property type="project" value="UniProtKB-UniRule"/>
</dbReference>
<dbReference type="CDD" id="cd00515">
    <property type="entry name" value="HAM1"/>
    <property type="match status" value="1"/>
</dbReference>
<dbReference type="FunFam" id="3.90.950.10:FF:000001">
    <property type="entry name" value="dITP/XTP pyrophosphatase"/>
    <property type="match status" value="1"/>
</dbReference>
<dbReference type="Gene3D" id="3.90.950.10">
    <property type="match status" value="1"/>
</dbReference>
<dbReference type="HAMAP" id="MF_01405">
    <property type="entry name" value="Non_canon_purine_NTPase"/>
    <property type="match status" value="1"/>
</dbReference>
<dbReference type="InterPro" id="IPR020922">
    <property type="entry name" value="dITP/XTP_pyrophosphatase"/>
</dbReference>
<dbReference type="InterPro" id="IPR029001">
    <property type="entry name" value="ITPase-like_fam"/>
</dbReference>
<dbReference type="InterPro" id="IPR002637">
    <property type="entry name" value="RdgB/HAM1"/>
</dbReference>
<dbReference type="NCBIfam" id="NF011397">
    <property type="entry name" value="PRK14822.1"/>
    <property type="match status" value="1"/>
</dbReference>
<dbReference type="NCBIfam" id="TIGR00042">
    <property type="entry name" value="RdgB/HAM1 family non-canonical purine NTP pyrophosphatase"/>
    <property type="match status" value="1"/>
</dbReference>
<dbReference type="PANTHER" id="PTHR11067:SF9">
    <property type="entry name" value="INOSINE TRIPHOSPHATE PYROPHOSPHATASE"/>
    <property type="match status" value="1"/>
</dbReference>
<dbReference type="PANTHER" id="PTHR11067">
    <property type="entry name" value="INOSINE TRIPHOSPHATE PYROPHOSPHATASE/HAM1 PROTEIN"/>
    <property type="match status" value="1"/>
</dbReference>
<dbReference type="Pfam" id="PF01725">
    <property type="entry name" value="Ham1p_like"/>
    <property type="match status" value="1"/>
</dbReference>
<dbReference type="SUPFAM" id="SSF52972">
    <property type="entry name" value="ITPase-like"/>
    <property type="match status" value="1"/>
</dbReference>
<proteinExistence type="inferred from homology"/>
<comment type="function">
    <text evidence="1">Pyrophosphatase that catalyzes the hydrolysis of nucleoside triphosphates to their monophosphate derivatives, with a high preference for the non-canonical purine nucleotides XTP (xanthosine triphosphate), dITP (deoxyinosine triphosphate) and ITP. Seems to function as a house-cleaning enzyme that removes non-canonical purine nucleotides from the nucleotide pool, thus preventing their incorporation into DNA/RNA and avoiding chromosomal lesions.</text>
</comment>
<comment type="catalytic activity">
    <reaction evidence="1">
        <text>XTP + H2O = XMP + diphosphate + H(+)</text>
        <dbReference type="Rhea" id="RHEA:28610"/>
        <dbReference type="ChEBI" id="CHEBI:15377"/>
        <dbReference type="ChEBI" id="CHEBI:15378"/>
        <dbReference type="ChEBI" id="CHEBI:33019"/>
        <dbReference type="ChEBI" id="CHEBI:57464"/>
        <dbReference type="ChEBI" id="CHEBI:61314"/>
        <dbReference type="EC" id="3.6.1.66"/>
    </reaction>
</comment>
<comment type="catalytic activity">
    <reaction evidence="1">
        <text>dITP + H2O = dIMP + diphosphate + H(+)</text>
        <dbReference type="Rhea" id="RHEA:28342"/>
        <dbReference type="ChEBI" id="CHEBI:15377"/>
        <dbReference type="ChEBI" id="CHEBI:15378"/>
        <dbReference type="ChEBI" id="CHEBI:33019"/>
        <dbReference type="ChEBI" id="CHEBI:61194"/>
        <dbReference type="ChEBI" id="CHEBI:61382"/>
        <dbReference type="EC" id="3.6.1.66"/>
    </reaction>
</comment>
<comment type="catalytic activity">
    <reaction evidence="1">
        <text>ITP + H2O = IMP + diphosphate + H(+)</text>
        <dbReference type="Rhea" id="RHEA:29399"/>
        <dbReference type="ChEBI" id="CHEBI:15377"/>
        <dbReference type="ChEBI" id="CHEBI:15378"/>
        <dbReference type="ChEBI" id="CHEBI:33019"/>
        <dbReference type="ChEBI" id="CHEBI:58053"/>
        <dbReference type="ChEBI" id="CHEBI:61402"/>
        <dbReference type="EC" id="3.6.1.66"/>
    </reaction>
</comment>
<comment type="cofactor">
    <cofactor evidence="1">
        <name>Mg(2+)</name>
        <dbReference type="ChEBI" id="CHEBI:18420"/>
    </cofactor>
    <text evidence="1">Binds 1 Mg(2+) ion per subunit.</text>
</comment>
<comment type="subunit">
    <text evidence="1">Homodimer.</text>
</comment>
<comment type="similarity">
    <text evidence="1">Belongs to the HAM1 NTPase family.</text>
</comment>
<sequence length="202" mass="21791">MTKPQTLIIATNNANKAREFSAMLAPYDITIKTLADFPNIPEIKENGITFEENATKKATVVVEATGLPAIADDSGLMVKALHGDPGVFSARYAGDHDDAANNAKLLANLGGVPEAERTATFHTTLVALKPSGEKLVVNGELAGRILIAPRGDNGFGYDPLFWSSKFQKSLAELTPAQKNQISHRGAALRQLMTKFDEWWAKA</sequence>
<reference key="1">
    <citation type="journal article" date="2003" name="Proc. Natl. Acad. Sci. U.S.A.">
        <title>Complete genome sequence of Lactobacillus plantarum WCFS1.</title>
        <authorList>
            <person name="Kleerebezem M."/>
            <person name="Boekhorst J."/>
            <person name="van Kranenburg R."/>
            <person name="Molenaar D."/>
            <person name="Kuipers O.P."/>
            <person name="Leer R."/>
            <person name="Tarchini R."/>
            <person name="Peters S.A."/>
            <person name="Sandbrink H.M."/>
            <person name="Fiers M.W.E.J."/>
            <person name="Stiekema W."/>
            <person name="Klein Lankhorst R.M."/>
            <person name="Bron P.A."/>
            <person name="Hoffer S.M."/>
            <person name="Nierop Groot M.N."/>
            <person name="Kerkhoven R."/>
            <person name="De Vries M."/>
            <person name="Ursing B."/>
            <person name="De Vos W.M."/>
            <person name="Siezen R.J."/>
        </authorList>
    </citation>
    <scope>NUCLEOTIDE SEQUENCE [LARGE SCALE GENOMIC DNA]</scope>
    <source>
        <strain>ATCC BAA-793 / NCIMB 8826 / WCFS1</strain>
    </source>
</reference>
<reference key="2">
    <citation type="journal article" date="2012" name="J. Bacteriol.">
        <title>Complete resequencing and reannotation of the Lactobacillus plantarum WCFS1 genome.</title>
        <authorList>
            <person name="Siezen R.J."/>
            <person name="Francke C."/>
            <person name="Renckens B."/>
            <person name="Boekhorst J."/>
            <person name="Wels M."/>
            <person name="Kleerebezem M."/>
            <person name="van Hijum S.A."/>
        </authorList>
    </citation>
    <scope>NUCLEOTIDE SEQUENCE [LARGE SCALE GENOMIC DNA]</scope>
    <scope>GENOME REANNOTATION</scope>
    <source>
        <strain>ATCC BAA-793 / NCIMB 8826 / WCFS1</strain>
    </source>
</reference>
<protein>
    <recommendedName>
        <fullName evidence="1">dITP/XTP pyrophosphatase</fullName>
        <ecNumber evidence="1">3.6.1.66</ecNumber>
    </recommendedName>
    <alternativeName>
        <fullName evidence="1">Non-canonical purine NTP pyrophosphatase</fullName>
    </alternativeName>
    <alternativeName>
        <fullName evidence="1">Non-standard purine NTP pyrophosphatase</fullName>
    </alternativeName>
    <alternativeName>
        <fullName evidence="1">Nucleoside-triphosphate diphosphatase</fullName>
    </alternativeName>
    <alternativeName>
        <fullName evidence="1">Nucleoside-triphosphate pyrophosphatase</fullName>
        <shortName evidence="1">NTPase</shortName>
    </alternativeName>
</protein>
<feature type="chain" id="PRO_0000178180" description="dITP/XTP pyrophosphatase">
    <location>
        <begin position="1"/>
        <end position="202"/>
    </location>
</feature>
<feature type="active site" description="Proton acceptor" evidence="1">
    <location>
        <position position="73"/>
    </location>
</feature>
<feature type="binding site" evidence="1">
    <location>
        <begin position="11"/>
        <end position="16"/>
    </location>
    <ligand>
        <name>substrate</name>
    </ligand>
</feature>
<feature type="binding site" evidence="1">
    <location>
        <position position="73"/>
    </location>
    <ligand>
        <name>Mg(2+)</name>
        <dbReference type="ChEBI" id="CHEBI:18420"/>
    </ligand>
</feature>
<feature type="binding site" evidence="1">
    <location>
        <position position="74"/>
    </location>
    <ligand>
        <name>substrate</name>
    </ligand>
</feature>
<feature type="binding site" evidence="1">
    <location>
        <begin position="155"/>
        <end position="158"/>
    </location>
    <ligand>
        <name>substrate</name>
    </ligand>
</feature>
<feature type="binding site" evidence="1">
    <location>
        <position position="178"/>
    </location>
    <ligand>
        <name>substrate</name>
    </ligand>
</feature>
<feature type="binding site" evidence="1">
    <location>
        <begin position="183"/>
        <end position="184"/>
    </location>
    <ligand>
        <name>substrate</name>
    </ligand>
</feature>
<gene>
    <name type="ordered locus">lp_2267</name>
</gene>
<name>IXTPA_LACPL</name>